<evidence type="ECO:0000250" key="1"/>
<evidence type="ECO:0000255" key="2"/>
<evidence type="ECO:0000305" key="3"/>
<proteinExistence type="evidence at transcript level"/>
<feature type="transit peptide" description="Chloroplast" evidence="2">
    <location>
        <begin position="1"/>
        <end position="23"/>
    </location>
</feature>
<feature type="chain" id="PRO_0000162636" description="Group 1 truncated hemoglobin LI410">
    <location>
        <begin position="24"/>
        <end position="171"/>
    </location>
</feature>
<feature type="binding site" description="distal binding residue" evidence="1">
    <location>
        <position position="63"/>
    </location>
    <ligand>
        <name>heme</name>
        <dbReference type="ChEBI" id="CHEBI:30413"/>
    </ligand>
    <ligandPart>
        <name>Fe</name>
        <dbReference type="ChEBI" id="CHEBI:18248"/>
    </ligandPart>
</feature>
<feature type="binding site" description="proximal binding residue" evidence="2">
    <location>
        <position position="111"/>
    </location>
    <ligand>
        <name>heme</name>
        <dbReference type="ChEBI" id="CHEBI:30413"/>
    </ligand>
    <ligandPart>
        <name>Fe</name>
        <dbReference type="ChEBI" id="CHEBI:18248"/>
    </ligandPart>
</feature>
<comment type="cofactor">
    <cofactor evidence="1">
        <name>heme</name>
        <dbReference type="ChEBI" id="CHEBI:30413"/>
    </cofactor>
    <text evidence="1">Binds 1 heme group per subunit.</text>
</comment>
<comment type="subcellular location">
    <subcellularLocation>
        <location>Plastid</location>
        <location>Chloroplast</location>
    </subcellularLocation>
    <text>Particularly in the pyrenoid and the thylakoid region.</text>
</comment>
<comment type="induction">
    <text>By light.</text>
</comment>
<comment type="similarity">
    <text evidence="3">Belongs to the truncated hemoglobin family. Group I subfamily.</text>
</comment>
<organism>
    <name type="scientific">Chlamydomonas moewusii</name>
    <name type="common">Chlamydomonas eugametos</name>
    <dbReference type="NCBI Taxonomy" id="3054"/>
    <lineage>
        <taxon>Eukaryota</taxon>
        <taxon>Viridiplantae</taxon>
        <taxon>Chlorophyta</taxon>
        <taxon>core chlorophytes</taxon>
        <taxon>Chlorophyceae</taxon>
        <taxon>CS clade</taxon>
        <taxon>Chlamydomonadales</taxon>
        <taxon>Chlamydomonadaceae</taxon>
        <taxon>Chlamydomonas</taxon>
    </lineage>
</organism>
<protein>
    <recommendedName>
        <fullName>Group 1 truncated hemoglobin LI410</fullName>
        <shortName>Truncated Hb</shortName>
    </recommendedName>
    <alternativeName>
        <fullName>Globin LI410</fullName>
    </alternativeName>
</protein>
<reference key="1">
    <citation type="journal article" date="1994" name="Mol. Gen. Genet.">
        <title>Nuclear genes encoding chloroplast hemoglobins in the unicellular green alga Chlamydomonas eugametos.</title>
        <authorList>
            <person name="Couture M."/>
            <person name="Chamberland H."/>
            <person name="St Pierre B."/>
            <person name="Lafontaine J."/>
            <person name="Guertin M."/>
        </authorList>
    </citation>
    <scope>NUCLEOTIDE SEQUENCE [MRNA]</scope>
    <source>
        <strain>UTEX 9</strain>
    </source>
</reference>
<keyword id="KW-0150">Chloroplast</keyword>
<keyword id="KW-0349">Heme</keyword>
<keyword id="KW-0408">Iron</keyword>
<keyword id="KW-0479">Metal-binding</keyword>
<keyword id="KW-0561">Oxygen transport</keyword>
<keyword id="KW-0934">Plastid</keyword>
<keyword id="KW-0809">Transit peptide</keyword>
<keyword id="KW-0813">Transport</keyword>
<accession>P52334</accession>
<sequence length="171" mass="18598">MMRTVQLRTLRPCIRAQQQPVRAPTSVAAATATTPAPTKKCPFSLFAKLGGREAVEAAVDKFYNKVVADPTVSVFFSKTDMKVQRSKQFAFLAYALGGAAEWKGKDMRTAHKDLVPHLTDVHFQAVVRHLSDTLAELGVTPGDIADAMAVVASTKTEVLNMPRQQGAESNR</sequence>
<name>TRHN2_CHLMO</name>
<dbReference type="EMBL" id="X72915">
    <property type="protein sequence ID" value="CAA51420.1"/>
    <property type="molecule type" value="mRNA"/>
</dbReference>
<dbReference type="PIR" id="S43907">
    <property type="entry name" value="S43907"/>
</dbReference>
<dbReference type="SMR" id="P52334"/>
<dbReference type="GO" id="GO:0009507">
    <property type="term" value="C:chloroplast"/>
    <property type="evidence" value="ECO:0007669"/>
    <property type="project" value="UniProtKB-SubCell"/>
</dbReference>
<dbReference type="GO" id="GO:0020037">
    <property type="term" value="F:heme binding"/>
    <property type="evidence" value="ECO:0007669"/>
    <property type="project" value="InterPro"/>
</dbReference>
<dbReference type="GO" id="GO:0046872">
    <property type="term" value="F:metal ion binding"/>
    <property type="evidence" value="ECO:0007669"/>
    <property type="project" value="UniProtKB-KW"/>
</dbReference>
<dbReference type="GO" id="GO:0019825">
    <property type="term" value="F:oxygen binding"/>
    <property type="evidence" value="ECO:0007669"/>
    <property type="project" value="InterPro"/>
</dbReference>
<dbReference type="GO" id="GO:0005344">
    <property type="term" value="F:oxygen carrier activity"/>
    <property type="evidence" value="ECO:0007669"/>
    <property type="project" value="UniProtKB-KW"/>
</dbReference>
<dbReference type="CDD" id="cd14756">
    <property type="entry name" value="TrHb"/>
    <property type="match status" value="1"/>
</dbReference>
<dbReference type="Gene3D" id="1.10.490.10">
    <property type="entry name" value="Globins"/>
    <property type="match status" value="1"/>
</dbReference>
<dbReference type="InterPro" id="IPR009050">
    <property type="entry name" value="Globin-like_sf"/>
</dbReference>
<dbReference type="InterPro" id="IPR012292">
    <property type="entry name" value="Globin/Proto"/>
</dbReference>
<dbReference type="InterPro" id="IPR019795">
    <property type="entry name" value="Globin_bac-like_CS"/>
</dbReference>
<dbReference type="InterPro" id="IPR001486">
    <property type="entry name" value="Hemoglobin_trunc"/>
</dbReference>
<dbReference type="Pfam" id="PF01152">
    <property type="entry name" value="Bac_globin"/>
    <property type="match status" value="1"/>
</dbReference>
<dbReference type="SUPFAM" id="SSF46458">
    <property type="entry name" value="Globin-like"/>
    <property type="match status" value="1"/>
</dbReference>
<dbReference type="PROSITE" id="PS01213">
    <property type="entry name" value="GLOBIN_FAM_2"/>
    <property type="match status" value="1"/>
</dbReference>
<gene>
    <name type="primary">LI410</name>
</gene>